<protein>
    <recommendedName>
        <fullName evidence="6">BLOC-2 complex member HPS6</fullName>
    </recommendedName>
    <alternativeName>
        <fullName>Hermansky-Pudlak syndrome 6 protein</fullName>
    </alternativeName>
    <alternativeName>
        <fullName>Ruby-eye protein homolog</fullName>
        <shortName>Ru</shortName>
    </alternativeName>
</protein>
<reference key="1">
    <citation type="journal article" date="2003" name="Nat. Genet.">
        <title>Ru2 and Ru encode mouse orthologs of the genes mutated in human Hermansky-Pudlak syndrome types 5 and 6.</title>
        <authorList>
            <person name="Zhang Q."/>
            <person name="Zhao B."/>
            <person name="Li W."/>
            <person name="Oiso N."/>
            <person name="Novak E.K."/>
            <person name="Rusiniak M.E."/>
            <person name="Gautam R."/>
            <person name="Chintala S."/>
            <person name="O'Brien E.P."/>
            <person name="Zhang Y."/>
            <person name="Roe B.A."/>
            <person name="Elliott R.W."/>
            <person name="Eicher E.M."/>
            <person name="Liang P."/>
            <person name="Kratz C."/>
            <person name="Legius E."/>
            <person name="Spritz R.A."/>
            <person name="O'Sullivan T.N."/>
            <person name="Copeland N.G."/>
            <person name="Jenkins N.A."/>
            <person name="Swank R.T."/>
        </authorList>
    </citation>
    <scope>NUCLEOTIDE SEQUENCE [MRNA]</scope>
    <scope>INVOLVEMENT IN HPS6</scope>
</reference>
<reference key="2">
    <citation type="journal article" date="2004" name="Nature">
        <title>The DNA sequence and comparative analysis of human chromosome 10.</title>
        <authorList>
            <person name="Deloukas P."/>
            <person name="Earthrowl M.E."/>
            <person name="Grafham D.V."/>
            <person name="Rubenfield M."/>
            <person name="French L."/>
            <person name="Steward C.A."/>
            <person name="Sims S.K."/>
            <person name="Jones M.C."/>
            <person name="Searle S."/>
            <person name="Scott C."/>
            <person name="Howe K."/>
            <person name="Hunt S.E."/>
            <person name="Andrews T.D."/>
            <person name="Gilbert J.G.R."/>
            <person name="Swarbreck D."/>
            <person name="Ashurst J.L."/>
            <person name="Taylor A."/>
            <person name="Battles J."/>
            <person name="Bird C.P."/>
            <person name="Ainscough R."/>
            <person name="Almeida J.P."/>
            <person name="Ashwell R.I.S."/>
            <person name="Ambrose K.D."/>
            <person name="Babbage A.K."/>
            <person name="Bagguley C.L."/>
            <person name="Bailey J."/>
            <person name="Banerjee R."/>
            <person name="Bates K."/>
            <person name="Beasley H."/>
            <person name="Bray-Allen S."/>
            <person name="Brown A.J."/>
            <person name="Brown J.Y."/>
            <person name="Burford D.C."/>
            <person name="Burrill W."/>
            <person name="Burton J."/>
            <person name="Cahill P."/>
            <person name="Camire D."/>
            <person name="Carter N.P."/>
            <person name="Chapman J.C."/>
            <person name="Clark S.Y."/>
            <person name="Clarke G."/>
            <person name="Clee C.M."/>
            <person name="Clegg S."/>
            <person name="Corby N."/>
            <person name="Coulson A."/>
            <person name="Dhami P."/>
            <person name="Dutta I."/>
            <person name="Dunn M."/>
            <person name="Faulkner L."/>
            <person name="Frankish A."/>
            <person name="Frankland J.A."/>
            <person name="Garner P."/>
            <person name="Garnett J."/>
            <person name="Gribble S."/>
            <person name="Griffiths C."/>
            <person name="Grocock R."/>
            <person name="Gustafson E."/>
            <person name="Hammond S."/>
            <person name="Harley J.L."/>
            <person name="Hart E."/>
            <person name="Heath P.D."/>
            <person name="Ho T.P."/>
            <person name="Hopkins B."/>
            <person name="Horne J."/>
            <person name="Howden P.J."/>
            <person name="Huckle E."/>
            <person name="Hynds C."/>
            <person name="Johnson C."/>
            <person name="Johnson D."/>
            <person name="Kana A."/>
            <person name="Kay M."/>
            <person name="Kimberley A.M."/>
            <person name="Kershaw J.K."/>
            <person name="Kokkinaki M."/>
            <person name="Laird G.K."/>
            <person name="Lawlor S."/>
            <person name="Lee H.M."/>
            <person name="Leongamornlert D.A."/>
            <person name="Laird G."/>
            <person name="Lloyd C."/>
            <person name="Lloyd D.M."/>
            <person name="Loveland J."/>
            <person name="Lovell J."/>
            <person name="McLaren S."/>
            <person name="McLay K.E."/>
            <person name="McMurray A."/>
            <person name="Mashreghi-Mohammadi M."/>
            <person name="Matthews L."/>
            <person name="Milne S."/>
            <person name="Nickerson T."/>
            <person name="Nguyen M."/>
            <person name="Overton-Larty E."/>
            <person name="Palmer S.A."/>
            <person name="Pearce A.V."/>
            <person name="Peck A.I."/>
            <person name="Pelan S."/>
            <person name="Phillimore B."/>
            <person name="Porter K."/>
            <person name="Rice C.M."/>
            <person name="Rogosin A."/>
            <person name="Ross M.T."/>
            <person name="Sarafidou T."/>
            <person name="Sehra H.K."/>
            <person name="Shownkeen R."/>
            <person name="Skuce C.D."/>
            <person name="Smith M."/>
            <person name="Standring L."/>
            <person name="Sycamore N."/>
            <person name="Tester J."/>
            <person name="Thorpe A."/>
            <person name="Torcasso W."/>
            <person name="Tracey A."/>
            <person name="Tromans A."/>
            <person name="Tsolas J."/>
            <person name="Wall M."/>
            <person name="Walsh J."/>
            <person name="Wang H."/>
            <person name="Weinstock K."/>
            <person name="West A.P."/>
            <person name="Willey D.L."/>
            <person name="Whitehead S.L."/>
            <person name="Wilming L."/>
            <person name="Wray P.W."/>
            <person name="Young L."/>
            <person name="Chen Y."/>
            <person name="Lovering R.C."/>
            <person name="Moschonas N.K."/>
            <person name="Siebert R."/>
            <person name="Fechtel K."/>
            <person name="Bentley D."/>
            <person name="Durbin R.M."/>
            <person name="Hubbard T."/>
            <person name="Doucette-Stamm L."/>
            <person name="Beck S."/>
            <person name="Smith D.R."/>
            <person name="Rogers J."/>
        </authorList>
    </citation>
    <scope>NUCLEOTIDE SEQUENCE [LARGE SCALE GENOMIC DNA]</scope>
</reference>
<reference key="3">
    <citation type="submission" date="2005-09" db="EMBL/GenBank/DDBJ databases">
        <authorList>
            <person name="Mural R.J."/>
            <person name="Istrail S."/>
            <person name="Sutton G.G."/>
            <person name="Florea L."/>
            <person name="Halpern A.L."/>
            <person name="Mobarry C.M."/>
            <person name="Lippert R."/>
            <person name="Walenz B."/>
            <person name="Shatkay H."/>
            <person name="Dew I."/>
            <person name="Miller J.R."/>
            <person name="Flanigan M.J."/>
            <person name="Edwards N.J."/>
            <person name="Bolanos R."/>
            <person name="Fasulo D."/>
            <person name="Halldorsson B.V."/>
            <person name="Hannenhalli S."/>
            <person name="Turner R."/>
            <person name="Yooseph S."/>
            <person name="Lu F."/>
            <person name="Nusskern D.R."/>
            <person name="Shue B.C."/>
            <person name="Zheng X.H."/>
            <person name="Zhong F."/>
            <person name="Delcher A.L."/>
            <person name="Huson D.H."/>
            <person name="Kravitz S.A."/>
            <person name="Mouchard L."/>
            <person name="Reinert K."/>
            <person name="Remington K.A."/>
            <person name="Clark A.G."/>
            <person name="Waterman M.S."/>
            <person name="Eichler E.E."/>
            <person name="Adams M.D."/>
            <person name="Hunkapiller M.W."/>
            <person name="Myers E.W."/>
            <person name="Venter J.C."/>
        </authorList>
    </citation>
    <scope>NUCLEOTIDE SEQUENCE [LARGE SCALE GENOMIC DNA]</scope>
</reference>
<reference key="4">
    <citation type="journal article" date="2004" name="Genome Res.">
        <title>The status, quality, and expansion of the NIH full-length cDNA project: the Mammalian Gene Collection (MGC).</title>
        <authorList>
            <consortium name="The MGC Project Team"/>
        </authorList>
    </citation>
    <scope>NUCLEOTIDE SEQUENCE [LARGE SCALE MRNA]</scope>
    <source>
        <tissue>Skin</tissue>
    </source>
</reference>
<reference key="5">
    <citation type="journal article" date="2004" name="Nat. Genet.">
        <title>Complete sequencing and characterization of 21,243 full-length human cDNAs.</title>
        <authorList>
            <person name="Ota T."/>
            <person name="Suzuki Y."/>
            <person name="Nishikawa T."/>
            <person name="Otsuki T."/>
            <person name="Sugiyama T."/>
            <person name="Irie R."/>
            <person name="Wakamatsu A."/>
            <person name="Hayashi K."/>
            <person name="Sato H."/>
            <person name="Nagai K."/>
            <person name="Kimura K."/>
            <person name="Makita H."/>
            <person name="Sekine M."/>
            <person name="Obayashi M."/>
            <person name="Nishi T."/>
            <person name="Shibahara T."/>
            <person name="Tanaka T."/>
            <person name="Ishii S."/>
            <person name="Yamamoto J."/>
            <person name="Saito K."/>
            <person name="Kawai Y."/>
            <person name="Isono Y."/>
            <person name="Nakamura Y."/>
            <person name="Nagahari K."/>
            <person name="Murakami K."/>
            <person name="Yasuda T."/>
            <person name="Iwayanagi T."/>
            <person name="Wagatsuma M."/>
            <person name="Shiratori A."/>
            <person name="Sudo H."/>
            <person name="Hosoiri T."/>
            <person name="Kaku Y."/>
            <person name="Kodaira H."/>
            <person name="Kondo H."/>
            <person name="Sugawara M."/>
            <person name="Takahashi M."/>
            <person name="Kanda K."/>
            <person name="Yokoi T."/>
            <person name="Furuya T."/>
            <person name="Kikkawa E."/>
            <person name="Omura Y."/>
            <person name="Abe K."/>
            <person name="Kamihara K."/>
            <person name="Katsuta N."/>
            <person name="Sato K."/>
            <person name="Tanikawa M."/>
            <person name="Yamazaki M."/>
            <person name="Ninomiya K."/>
            <person name="Ishibashi T."/>
            <person name="Yamashita H."/>
            <person name="Murakawa K."/>
            <person name="Fujimori K."/>
            <person name="Tanai H."/>
            <person name="Kimata M."/>
            <person name="Watanabe M."/>
            <person name="Hiraoka S."/>
            <person name="Chiba Y."/>
            <person name="Ishida S."/>
            <person name="Ono Y."/>
            <person name="Takiguchi S."/>
            <person name="Watanabe S."/>
            <person name="Yosida M."/>
            <person name="Hotuta T."/>
            <person name="Kusano J."/>
            <person name="Kanehori K."/>
            <person name="Takahashi-Fujii A."/>
            <person name="Hara H."/>
            <person name="Tanase T.-O."/>
            <person name="Nomura Y."/>
            <person name="Togiya S."/>
            <person name="Komai F."/>
            <person name="Hara R."/>
            <person name="Takeuchi K."/>
            <person name="Arita M."/>
            <person name="Imose N."/>
            <person name="Musashino K."/>
            <person name="Yuuki H."/>
            <person name="Oshima A."/>
            <person name="Sasaki N."/>
            <person name="Aotsuka S."/>
            <person name="Yoshikawa Y."/>
            <person name="Matsunawa H."/>
            <person name="Ichihara T."/>
            <person name="Shiohata N."/>
            <person name="Sano S."/>
            <person name="Moriya S."/>
            <person name="Momiyama H."/>
            <person name="Satoh N."/>
            <person name="Takami S."/>
            <person name="Terashima Y."/>
            <person name="Suzuki O."/>
            <person name="Nakagawa S."/>
            <person name="Senoh A."/>
            <person name="Mizoguchi H."/>
            <person name="Goto Y."/>
            <person name="Shimizu F."/>
            <person name="Wakebe H."/>
            <person name="Hishigaki H."/>
            <person name="Watanabe T."/>
            <person name="Sugiyama A."/>
            <person name="Takemoto M."/>
            <person name="Kawakami B."/>
            <person name="Yamazaki M."/>
            <person name="Watanabe K."/>
            <person name="Kumagai A."/>
            <person name="Itakura S."/>
            <person name="Fukuzumi Y."/>
            <person name="Fujimori Y."/>
            <person name="Komiyama M."/>
            <person name="Tashiro H."/>
            <person name="Tanigami A."/>
            <person name="Fujiwara T."/>
            <person name="Ono T."/>
            <person name="Yamada K."/>
            <person name="Fujii Y."/>
            <person name="Ozaki K."/>
            <person name="Hirao M."/>
            <person name="Ohmori Y."/>
            <person name="Kawabata A."/>
            <person name="Hikiji T."/>
            <person name="Kobatake N."/>
            <person name="Inagaki H."/>
            <person name="Ikema Y."/>
            <person name="Okamoto S."/>
            <person name="Okitani R."/>
            <person name="Kawakami T."/>
            <person name="Noguchi S."/>
            <person name="Itoh T."/>
            <person name="Shigeta K."/>
            <person name="Senba T."/>
            <person name="Matsumura K."/>
            <person name="Nakajima Y."/>
            <person name="Mizuno T."/>
            <person name="Morinaga M."/>
            <person name="Sasaki M."/>
            <person name="Togashi T."/>
            <person name="Oyama M."/>
            <person name="Hata H."/>
            <person name="Watanabe M."/>
            <person name="Komatsu T."/>
            <person name="Mizushima-Sugano J."/>
            <person name="Satoh T."/>
            <person name="Shirai Y."/>
            <person name="Takahashi Y."/>
            <person name="Nakagawa K."/>
            <person name="Okumura K."/>
            <person name="Nagase T."/>
            <person name="Nomura N."/>
            <person name="Kikuchi H."/>
            <person name="Masuho Y."/>
            <person name="Yamashita R."/>
            <person name="Nakai K."/>
            <person name="Yada T."/>
            <person name="Nakamura Y."/>
            <person name="Ohara O."/>
            <person name="Isogai T."/>
            <person name="Sugano S."/>
        </authorList>
    </citation>
    <scope>NUCLEOTIDE SEQUENCE [LARGE SCALE MRNA] OF 368-775</scope>
    <source>
        <tissue>Kidney</tissue>
    </source>
</reference>
<reference key="6">
    <citation type="journal article" date="2004" name="Traffic">
        <title>Characterization of BLOC-2, a complex containing the Hermansky-Pudlak syndrome proteins HPS3, HPS5 and HPS6.</title>
        <authorList>
            <person name="Di Pietro S.M."/>
            <person name="Falcon-Perez J.M."/>
            <person name="Dell'Angelica E.C."/>
        </authorList>
    </citation>
    <scope>SUBCELLULAR LOCATION</scope>
    <scope>INTERACTION WITH HPS3 AND HPS5</scope>
</reference>
<reference key="7">
    <citation type="journal article" date="2005" name="Cell">
        <title>A human protein-protein interaction network: a resource for annotating the proteome.</title>
        <authorList>
            <person name="Stelzl U."/>
            <person name="Worm U."/>
            <person name="Lalowski M."/>
            <person name="Haenig C."/>
            <person name="Brembeck F.H."/>
            <person name="Goehler H."/>
            <person name="Stroedicke M."/>
            <person name="Zenkner M."/>
            <person name="Schoenherr A."/>
            <person name="Koeppen S."/>
            <person name="Timm J."/>
            <person name="Mintzlaff S."/>
            <person name="Abraham C."/>
            <person name="Bock N."/>
            <person name="Kietzmann S."/>
            <person name="Goedde A."/>
            <person name="Toksoez E."/>
            <person name="Droege A."/>
            <person name="Krobitsch S."/>
            <person name="Korn B."/>
            <person name="Birchmeier W."/>
            <person name="Lehrach H."/>
            <person name="Wanker E.E."/>
        </authorList>
    </citation>
    <scope>INTERACTION WITH MNAT1</scope>
</reference>
<reference key="8">
    <citation type="journal article" date="2006" name="Hum. Mutat.">
        <title>A new genetic isolate with a unique phenotype of syndromic oculocutaneous albinism: clinical, molecular, and cellular characteristics.</title>
        <authorList>
            <person name="Schreyer-Shafir N."/>
            <person name="Huizing M."/>
            <person name="Anikster Y."/>
            <person name="Nusinker Z."/>
            <person name="Bejarano-Achache I."/>
            <person name="Maftzir G."/>
            <person name="Resnik L."/>
            <person name="Helip-Wooley A."/>
            <person name="Westbroek W."/>
            <person name="Gradstein L."/>
            <person name="Rosenmann A."/>
            <person name="Blumenfeld A."/>
        </authorList>
    </citation>
    <scope>FUNCTION</scope>
    <scope>INVOLVEMENT IN HPS6</scope>
</reference>
<reference key="9">
    <citation type="journal article" date="2006" name="Mol. Biol. Cell">
        <title>BLOC-1 interacts with BLOC-2 and the AP-3 complex to facilitate protein trafficking on endosomes.</title>
        <authorList>
            <person name="Di Pietro S.M."/>
            <person name="Falcon-Perez J.M."/>
            <person name="Tenza D."/>
            <person name="Setty S.R."/>
            <person name="Marks M.S."/>
            <person name="Raposo G."/>
            <person name="Dell'Angelica E.C."/>
        </authorList>
    </citation>
    <scope>INTERACTION WITH BLOC1 COMPLEX AND AP-3 COMPLEX</scope>
    <scope>SUBCELLULAR LOCATION</scope>
</reference>
<reference key="10">
    <citation type="journal article" date="2014" name="J. Cell Sci.">
        <title>HPS6 interacts with dynactin p150Glued to mediate retrograde trafficking and maturation of lysosomes.</title>
        <authorList>
            <person name="Li K."/>
            <person name="Yang L."/>
            <person name="Zhang C."/>
            <person name="Niu Y."/>
            <person name="Li W."/>
            <person name="Liu J.J."/>
        </authorList>
    </citation>
    <scope>FUNCTION</scope>
    <scope>INTERACTION WITH DCTN1; HPS3; HPS5 AND DYNEIN INTERMEDIATE CHAIN</scope>
    <scope>SUBCELLULAR LOCATION</scope>
</reference>
<sequence>MKRSGTLRLLSDLSAFGGAARLRELVAGDSAVRVRGSPDGRHLLLLRPPGAVAPQLLVASRGPGAELERAWPAGQPSPLDAFFLPWPARPALVLVWESGLAEVWGAGVGPGWRPLQSTELCPGGGARVVAVAALRGRLVWCEERQARAEGPSGSPAAAFSHCVCVRTLEPSGEASTSLGRTHVLLHHCPAFGLLASCRQLFLVPTATTWPGVAHVLLIWSPGKGKVMVAAPRLGLSYSKSLNPGRGDTWDFRTLLRGLPGLLSPREPLAVHTWAPTPQGLLLLDFGGTVSLLQSHGGTRAVGTLQEAPVGPWGSAALGTFQGTLACVLGSTLELLDMGSGQLLERKVLSTDRVHLLEPPAPGMEDEEELETRGNLRLLSALGLFCVGWEAPQGVELPSAKDLVFEEACGYYQRRSLRGAQLTPEELRHSSTFRAPQALASILQGHLPPSALLTMLRTELRDYRGLEQLKAQLVAGDDEEAGWTELAEQEVARLLRTELIGDQLAQLNTVFQALPTAAWGATLRALQLQLDGNGKLRSQAPPDVWKKVLGGITAGKEPPNGILPPFELLCQCLCQLEPRWLPPFVELAQQQGGPGWGAGGPGLPLYRRALAVLGEEGTRPEALELELLLSSGRPKAVLQAVGQLVQKEQWDRALDAGLALGPSSPLLRSEIFKLLLAEFAQHRRLDAHLPLLCRLCPPELAPAELLLLLRTYLPDEVGPPTPFPEPGAEPPLTVGLLKALLEQTGAQGWLSGPVLSPYEDILWDPSTPPPTPPRDL</sequence>
<name>HPS6_HUMAN</name>
<gene>
    <name type="primary">HPS6</name>
</gene>
<organism>
    <name type="scientific">Homo sapiens</name>
    <name type="common">Human</name>
    <dbReference type="NCBI Taxonomy" id="9606"/>
    <lineage>
        <taxon>Eukaryota</taxon>
        <taxon>Metazoa</taxon>
        <taxon>Chordata</taxon>
        <taxon>Craniata</taxon>
        <taxon>Vertebrata</taxon>
        <taxon>Euteleostomi</taxon>
        <taxon>Mammalia</taxon>
        <taxon>Eutheria</taxon>
        <taxon>Euarchontoglires</taxon>
        <taxon>Primates</taxon>
        <taxon>Haplorrhini</taxon>
        <taxon>Catarrhini</taxon>
        <taxon>Hominidae</taxon>
        <taxon>Homo</taxon>
    </lineage>
</organism>
<feature type="chain" id="PRO_0000084056" description="BLOC-2 complex member HPS6">
    <location>
        <begin position="1"/>
        <end position="775"/>
    </location>
</feature>
<comment type="function">
    <text evidence="4 5">May regulate the synthesis and function of lysosomes and of highly specialized organelles, such as melanosomes and platelet dense granules (PubMed:17041891). Acts as a cargo adapter for the dynein-dynactin motor complex to mediate the transport of lysosomes from the cell periphery to the perinuclear region. Facilitates retrograde lysosomal trafficking by linking the motor complex to lysosomes, and perinuclear positioning of lysosomes is crucial for the delivery of endocytic cargos to lysosomes, for lysosome maturation and functioning (PubMed:25189619).</text>
</comment>
<comment type="subunit">
    <text evidence="2 3 5 7">Component of the biogenesis of lysosome-related organelles complex-2 (or BLOC2) composed of HPS3, HPS5 and HPS6. Interacts with HPS5 and HPS3 (PubMed:15030569, PubMed:25189619). Interacts with biogenesis of lysosome-related organelles complex-1 (BLOC1). Interacts with AP-3 complex (PubMed:16837549). Interacts with MNAT1 (Probable). Interacts with DCTN1 and dynein intermediate chain (PubMed:25189619).</text>
</comment>
<comment type="interaction">
    <interactant intactId="EBI-721349">
        <id>Q86YV9</id>
    </interactant>
    <interactant intactId="EBI-16781620">
        <id>Q969F9</id>
        <label>HPS3</label>
    </interactant>
    <organismsDiffer>false</organismsDiffer>
    <experiments>2</experiments>
</comment>
<comment type="subcellular location">
    <subcellularLocation>
        <location evidence="2">Microsome membrane</location>
    </subcellularLocation>
    <subcellularLocation>
        <location evidence="2">Cytoplasm</location>
        <location evidence="2">Cytosol</location>
    </subcellularLocation>
    <subcellularLocation>
        <location evidence="3">Early endosome membrane</location>
    </subcellularLocation>
    <subcellularLocation>
        <location evidence="5">Lysosome membrane</location>
    </subcellularLocation>
</comment>
<comment type="tissue specificity">
    <text>Ubiquitous.</text>
</comment>
<comment type="disease" evidence="1 4">
    <disease id="DI-00562">
        <name>Hermansky-Pudlak syndrome 6</name>
        <acronym>HPS6</acronym>
        <description>A form of Hermansky-Pudlak syndrome, a genetically heterogeneous autosomal recessive disorder characterized by oculocutaneous albinism, bleeding due to platelet storage pool deficiency, and lysosomal storage defects. This syndrome results from defects of diverse cytoplasmic organelles including melanosomes, platelet dense granules and lysosomes. Ceroid storage in the lungs is associated with pulmonary fibrosis, a common cause of premature death in individuals with HPS.</description>
        <dbReference type="MIM" id="614075"/>
    </disease>
    <text>The disease is caused by variants affecting the gene represented in this entry.</text>
</comment>
<comment type="sequence caution" evidence="6">
    <conflict type="erroneous initiation">
        <sequence resource="EMBL-CDS" id="BAB15378"/>
    </conflict>
</comment>
<keyword id="KW-0015">Albinism</keyword>
<keyword id="KW-0963">Cytoplasm</keyword>
<keyword id="KW-0256">Endoplasmic reticulum</keyword>
<keyword id="KW-0967">Endosome</keyword>
<keyword id="KW-0363">Hermansky-Pudlak syndrome</keyword>
<keyword id="KW-0458">Lysosome</keyword>
<keyword id="KW-0472">Membrane</keyword>
<keyword id="KW-0492">Microsome</keyword>
<keyword id="KW-1267">Proteomics identification</keyword>
<keyword id="KW-1185">Reference proteome</keyword>
<proteinExistence type="evidence at protein level"/>
<dbReference type="EMBL" id="AF536238">
    <property type="protein sequence ID" value="AAO25965.1"/>
    <property type="molecule type" value="mRNA"/>
</dbReference>
<dbReference type="EMBL" id="AL500527">
    <property type="status" value="NOT_ANNOTATED_CDS"/>
    <property type="molecule type" value="Genomic_DNA"/>
</dbReference>
<dbReference type="EMBL" id="CH471066">
    <property type="protein sequence ID" value="EAW49726.1"/>
    <property type="molecule type" value="Genomic_DNA"/>
</dbReference>
<dbReference type="EMBL" id="BC011594">
    <property type="protein sequence ID" value="AAH11594.2"/>
    <property type="molecule type" value="mRNA"/>
</dbReference>
<dbReference type="EMBL" id="BC014993">
    <property type="protein sequence ID" value="AAH14993.2"/>
    <property type="molecule type" value="mRNA"/>
</dbReference>
<dbReference type="EMBL" id="AK026154">
    <property type="protein sequence ID" value="BAB15378.1"/>
    <property type="status" value="ALT_INIT"/>
    <property type="molecule type" value="mRNA"/>
</dbReference>
<dbReference type="CCDS" id="CCDS7527.1"/>
<dbReference type="RefSeq" id="NP_079023.2">
    <property type="nucleotide sequence ID" value="NM_024747.5"/>
</dbReference>
<dbReference type="BioGRID" id="122900">
    <property type="interactions" value="55"/>
</dbReference>
<dbReference type="ComplexPortal" id="CPX-5044">
    <property type="entry name" value="BLOC-2 complex"/>
</dbReference>
<dbReference type="CORUM" id="Q86YV9"/>
<dbReference type="FunCoup" id="Q86YV9">
    <property type="interactions" value="171"/>
</dbReference>
<dbReference type="IntAct" id="Q86YV9">
    <property type="interactions" value="26"/>
</dbReference>
<dbReference type="MINT" id="Q86YV9"/>
<dbReference type="STRING" id="9606.ENSP00000299238"/>
<dbReference type="ChEMBL" id="CHEMBL4295884"/>
<dbReference type="GlyGen" id="Q86YV9">
    <property type="glycosylation" value="2 sites"/>
</dbReference>
<dbReference type="iPTMnet" id="Q86YV9"/>
<dbReference type="PhosphoSitePlus" id="Q86YV9"/>
<dbReference type="BioMuta" id="HPS6"/>
<dbReference type="DMDM" id="47115774"/>
<dbReference type="jPOST" id="Q86YV9"/>
<dbReference type="MassIVE" id="Q86YV9"/>
<dbReference type="PaxDb" id="9606-ENSP00000299238"/>
<dbReference type="PeptideAtlas" id="Q86YV9"/>
<dbReference type="ProteomicsDB" id="70478"/>
<dbReference type="Pumba" id="Q86YV9"/>
<dbReference type="Antibodypedia" id="31371">
    <property type="antibodies" value="141 antibodies from 28 providers"/>
</dbReference>
<dbReference type="DNASU" id="79803"/>
<dbReference type="Ensembl" id="ENST00000299238.7">
    <property type="protein sequence ID" value="ENSP00000299238.5"/>
    <property type="gene ID" value="ENSG00000166189.8"/>
</dbReference>
<dbReference type="GeneID" id="79803"/>
<dbReference type="KEGG" id="hsa:79803"/>
<dbReference type="MANE-Select" id="ENST00000299238.7">
    <property type="protein sequence ID" value="ENSP00000299238.5"/>
    <property type="RefSeq nucleotide sequence ID" value="NM_024747.6"/>
    <property type="RefSeq protein sequence ID" value="NP_079023.2"/>
</dbReference>
<dbReference type="UCSC" id="uc001kuj.4">
    <property type="organism name" value="human"/>
</dbReference>
<dbReference type="AGR" id="HGNC:18817"/>
<dbReference type="CTD" id="79803"/>
<dbReference type="DisGeNET" id="79803"/>
<dbReference type="GeneCards" id="HPS6"/>
<dbReference type="GeneReviews" id="HPS6"/>
<dbReference type="HGNC" id="HGNC:18817">
    <property type="gene designation" value="HPS6"/>
</dbReference>
<dbReference type="HPA" id="ENSG00000166189">
    <property type="expression patterns" value="Low tissue specificity"/>
</dbReference>
<dbReference type="MalaCards" id="HPS6"/>
<dbReference type="MIM" id="607522">
    <property type="type" value="gene"/>
</dbReference>
<dbReference type="MIM" id="614075">
    <property type="type" value="phenotype"/>
</dbReference>
<dbReference type="neXtProt" id="NX_Q86YV9"/>
<dbReference type="OpenTargets" id="ENSG00000166189"/>
<dbReference type="Orphanet" id="231512">
    <property type="disease" value="Hermansky-Pudlak syndrome due to BLOC-2 deficiency"/>
</dbReference>
<dbReference type="PharmGKB" id="PA134989637"/>
<dbReference type="VEuPathDB" id="HostDB:ENSG00000166189"/>
<dbReference type="eggNOG" id="ENOG502QSBH">
    <property type="taxonomic scope" value="Eukaryota"/>
</dbReference>
<dbReference type="GeneTree" id="ENSGT00390000001546"/>
<dbReference type="HOGENOM" id="CLU_019081_0_0_1"/>
<dbReference type="InParanoid" id="Q86YV9"/>
<dbReference type="OMA" id="RAWPAGH"/>
<dbReference type="OrthoDB" id="8581967at2759"/>
<dbReference type="PAN-GO" id="Q86YV9">
    <property type="GO annotations" value="6 GO annotations based on evolutionary models"/>
</dbReference>
<dbReference type="PhylomeDB" id="Q86YV9"/>
<dbReference type="TreeFam" id="TF331635"/>
<dbReference type="PathwayCommons" id="Q86YV9"/>
<dbReference type="SignaLink" id="Q86YV9"/>
<dbReference type="SIGNOR" id="Q86YV9"/>
<dbReference type="BioGRID-ORCS" id="79803">
    <property type="hits" value="23 hits in 1156 CRISPR screens"/>
</dbReference>
<dbReference type="ChiTaRS" id="HPS6">
    <property type="organism name" value="human"/>
</dbReference>
<dbReference type="GeneWiki" id="HPS6"/>
<dbReference type="GenomeRNAi" id="79803"/>
<dbReference type="Pharos" id="Q86YV9">
    <property type="development level" value="Tbio"/>
</dbReference>
<dbReference type="PRO" id="PR:Q86YV9"/>
<dbReference type="Proteomes" id="UP000005640">
    <property type="component" value="Chromosome 10"/>
</dbReference>
<dbReference type="RNAct" id="Q86YV9">
    <property type="molecule type" value="protein"/>
</dbReference>
<dbReference type="Bgee" id="ENSG00000166189">
    <property type="expression patterns" value="Expressed in granulocyte and 159 other cell types or tissues"/>
</dbReference>
<dbReference type="GO" id="GO:0031084">
    <property type="term" value="C:BLOC-2 complex"/>
    <property type="evidence" value="ECO:0000353"/>
    <property type="project" value="FlyBase"/>
</dbReference>
<dbReference type="GO" id="GO:0005829">
    <property type="term" value="C:cytosol"/>
    <property type="evidence" value="ECO:0000314"/>
    <property type="project" value="HPA"/>
</dbReference>
<dbReference type="GO" id="GO:0005769">
    <property type="term" value="C:early endosome"/>
    <property type="evidence" value="ECO:0000303"/>
    <property type="project" value="ComplexPortal"/>
</dbReference>
<dbReference type="GO" id="GO:0031901">
    <property type="term" value="C:early endosome membrane"/>
    <property type="evidence" value="ECO:0007669"/>
    <property type="project" value="UniProtKB-SubCell"/>
</dbReference>
<dbReference type="GO" id="GO:0005783">
    <property type="term" value="C:endoplasmic reticulum"/>
    <property type="evidence" value="ECO:0007669"/>
    <property type="project" value="UniProtKB-KW"/>
</dbReference>
<dbReference type="GO" id="GO:0043231">
    <property type="term" value="C:intracellular membrane-bounded organelle"/>
    <property type="evidence" value="ECO:0000314"/>
    <property type="project" value="HPA"/>
</dbReference>
<dbReference type="GO" id="GO:0005765">
    <property type="term" value="C:lysosomal membrane"/>
    <property type="evidence" value="ECO:0000314"/>
    <property type="project" value="UniProtKB"/>
</dbReference>
<dbReference type="GO" id="GO:0016020">
    <property type="term" value="C:membrane"/>
    <property type="evidence" value="ECO:0007005"/>
    <property type="project" value="UniProtKB"/>
</dbReference>
<dbReference type="GO" id="GO:0005654">
    <property type="term" value="C:nucleoplasm"/>
    <property type="evidence" value="ECO:0000314"/>
    <property type="project" value="HPA"/>
</dbReference>
<dbReference type="GO" id="GO:0030742">
    <property type="term" value="F:GTP-dependent protein binding"/>
    <property type="evidence" value="ECO:0000353"/>
    <property type="project" value="ParkinsonsUK-UCL"/>
</dbReference>
<dbReference type="GO" id="GO:0031267">
    <property type="term" value="F:small GTPase binding"/>
    <property type="evidence" value="ECO:0000353"/>
    <property type="project" value="ParkinsonsUK-UCL"/>
</dbReference>
<dbReference type="GO" id="GO:0007596">
    <property type="term" value="P:blood coagulation"/>
    <property type="evidence" value="ECO:0007669"/>
    <property type="project" value="Ensembl"/>
</dbReference>
<dbReference type="GO" id="GO:0046907">
    <property type="term" value="P:intracellular transport"/>
    <property type="evidence" value="ECO:0000303"/>
    <property type="project" value="ComplexPortal"/>
</dbReference>
<dbReference type="GO" id="GO:0055088">
    <property type="term" value="P:lipid homeostasis"/>
    <property type="evidence" value="ECO:0007669"/>
    <property type="project" value="Ensembl"/>
</dbReference>
<dbReference type="GO" id="GO:0006629">
    <property type="term" value="P:lipid metabolic process"/>
    <property type="evidence" value="ECO:0007669"/>
    <property type="project" value="Ensembl"/>
</dbReference>
<dbReference type="GO" id="GO:0032418">
    <property type="term" value="P:lysosome localization"/>
    <property type="evidence" value="ECO:0000315"/>
    <property type="project" value="UniProtKB"/>
</dbReference>
<dbReference type="GO" id="GO:1903232">
    <property type="term" value="P:melanosome assembly"/>
    <property type="evidence" value="ECO:0000303"/>
    <property type="project" value="ComplexPortal"/>
</dbReference>
<dbReference type="GO" id="GO:0060155">
    <property type="term" value="P:platelet dense granule organization"/>
    <property type="evidence" value="ECO:0000303"/>
    <property type="project" value="ComplexPortal"/>
</dbReference>
<dbReference type="GO" id="GO:0072657">
    <property type="term" value="P:protein localization to membrane"/>
    <property type="evidence" value="ECO:0000315"/>
    <property type="project" value="ParkinsonsUK-UCL"/>
</dbReference>
<dbReference type="GO" id="GO:0009306">
    <property type="term" value="P:protein secretion"/>
    <property type="evidence" value="ECO:0007669"/>
    <property type="project" value="Ensembl"/>
</dbReference>
<dbReference type="InterPro" id="IPR017218">
    <property type="entry name" value="BLOC-2_complex_Hps6_subunit"/>
</dbReference>
<dbReference type="InterPro" id="IPR046822">
    <property type="entry name" value="HPS6_C"/>
</dbReference>
<dbReference type="InterPro" id="IPR046823">
    <property type="entry name" value="HPS6_N"/>
</dbReference>
<dbReference type="PANTHER" id="PTHR14696:SF2">
    <property type="entry name" value="BLOC-2 COMPLEX MEMBER HPS6"/>
    <property type="match status" value="1"/>
</dbReference>
<dbReference type="PANTHER" id="PTHR14696">
    <property type="entry name" value="HERMANSKY-PUDLAK SYNDROME 6 PROTEIN"/>
    <property type="match status" value="1"/>
</dbReference>
<dbReference type="Pfam" id="PF15702">
    <property type="entry name" value="HPS6"/>
    <property type="match status" value="1"/>
</dbReference>
<dbReference type="Pfam" id="PF20468">
    <property type="entry name" value="HPS6_C"/>
    <property type="match status" value="1"/>
</dbReference>
<dbReference type="PIRSF" id="PIRSF037476">
    <property type="entry name" value="BLOC-2_complex_Hps6"/>
    <property type="match status" value="1"/>
</dbReference>
<evidence type="ECO:0000269" key="1">
    <source>
    </source>
</evidence>
<evidence type="ECO:0000269" key="2">
    <source>
    </source>
</evidence>
<evidence type="ECO:0000269" key="3">
    <source>
    </source>
</evidence>
<evidence type="ECO:0000269" key="4">
    <source>
    </source>
</evidence>
<evidence type="ECO:0000269" key="5">
    <source>
    </source>
</evidence>
<evidence type="ECO:0000305" key="6"/>
<evidence type="ECO:0000305" key="7">
    <source>
    </source>
</evidence>
<accession>Q86YV9</accession>
<accession>Q5VV69</accession>
<accession>Q9H685</accession>